<keyword id="KW-0067">ATP-binding</keyword>
<keyword id="KW-0436">Ligase</keyword>
<keyword id="KW-0547">Nucleotide-binding</keyword>
<keyword id="KW-0648">Protein biosynthesis</keyword>
<comment type="function">
    <text evidence="1">Allows the formation of correctly charged Gln-tRNA(Gln) through the transamidation of misacylated Glu-tRNA(Gln) in organisms which lack glutaminyl-tRNA synthetase. The reaction takes place in the presence of glutamine and ATP through an activated gamma-phospho-Glu-tRNA(Gln).</text>
</comment>
<comment type="catalytic activity">
    <reaction evidence="1">
        <text>L-glutamyl-tRNA(Gln) + L-glutamine + ATP + H2O = L-glutaminyl-tRNA(Gln) + L-glutamate + ADP + phosphate + H(+)</text>
        <dbReference type="Rhea" id="RHEA:17521"/>
        <dbReference type="Rhea" id="RHEA-COMP:9681"/>
        <dbReference type="Rhea" id="RHEA-COMP:9684"/>
        <dbReference type="ChEBI" id="CHEBI:15377"/>
        <dbReference type="ChEBI" id="CHEBI:15378"/>
        <dbReference type="ChEBI" id="CHEBI:29985"/>
        <dbReference type="ChEBI" id="CHEBI:30616"/>
        <dbReference type="ChEBI" id="CHEBI:43474"/>
        <dbReference type="ChEBI" id="CHEBI:58359"/>
        <dbReference type="ChEBI" id="CHEBI:78520"/>
        <dbReference type="ChEBI" id="CHEBI:78521"/>
        <dbReference type="ChEBI" id="CHEBI:456216"/>
        <dbReference type="EC" id="6.3.5.7"/>
    </reaction>
</comment>
<comment type="subunit">
    <text evidence="1">Heterotrimer of A, B and C subunits.</text>
</comment>
<comment type="similarity">
    <text evidence="1">Belongs to the amidase family. GatA subfamily.</text>
</comment>
<proteinExistence type="inferred from homology"/>
<sequence length="491" mass="53602">MYRKSALELRDAVVNRELSVTAITEYFYHRIESHDEQIGAFLSLCKERALLRASRIDDKLAKGDPIGLLAGIPIGVKDNIHITGVKTTCASKMLENFVAPFDSTVVRRIEMEDGILLGKLNMDEFAMGSTTRYSAFHPTNNPWDLERVPGGSSGGSAAAVSARFCPIALGSDTGGSIRQPAAFCGVVGFKPSYGAVSRYGLVAFGSSLDQIGPLTTVVEDVALAMDAFAGRDPKDSTTRDFFKGTFSQALSLEVPKLIGVPRGFLDGLQEDCKENFFEALAVMEREGSRIIDVDLSVLKHAVPVYYIVASAEAATNLARFDGVRYGHRCAQADNMHEMYARSRKEGFGKEVTRRILLGNYVLSAERQNIFYKKGMAVRARLIDAFQAAFERCDVIAMPVCATPAIRDQDVLDPVSLYLQDIYTVAVNLAYLPAISVPSGLSKEGLPLGVQFIGERGSDQQICQVGYSFQEHSQIKQLYPKAVNGLFDGGIE</sequence>
<evidence type="ECO:0000255" key="1">
    <source>
        <dbReference type="HAMAP-Rule" id="MF_00120"/>
    </source>
</evidence>
<gene>
    <name evidence="1" type="primary">gatA</name>
    <name type="ordered locus">CTLon_0253</name>
</gene>
<organism>
    <name type="scientific">Chlamydia trachomatis serovar L2b (strain UCH-1/proctitis)</name>
    <dbReference type="NCBI Taxonomy" id="471473"/>
    <lineage>
        <taxon>Bacteria</taxon>
        <taxon>Pseudomonadati</taxon>
        <taxon>Chlamydiota</taxon>
        <taxon>Chlamydiia</taxon>
        <taxon>Chlamydiales</taxon>
        <taxon>Chlamydiaceae</taxon>
        <taxon>Chlamydia/Chlamydophila group</taxon>
        <taxon>Chlamydia</taxon>
    </lineage>
</organism>
<accession>B0BAY9</accession>
<reference key="1">
    <citation type="journal article" date="2008" name="Genome Res.">
        <title>Chlamydia trachomatis: genome sequence analysis of lymphogranuloma venereum isolates.</title>
        <authorList>
            <person name="Thomson N.R."/>
            <person name="Holden M.T.G."/>
            <person name="Carder C."/>
            <person name="Lennard N."/>
            <person name="Lockey S.J."/>
            <person name="Marsh P."/>
            <person name="Skipp P."/>
            <person name="O'Connor C.D."/>
            <person name="Goodhead I."/>
            <person name="Norbertzcak H."/>
            <person name="Harris B."/>
            <person name="Ormond D."/>
            <person name="Rance R."/>
            <person name="Quail M.A."/>
            <person name="Parkhill J."/>
            <person name="Stephens R.S."/>
            <person name="Clarke I.N."/>
        </authorList>
    </citation>
    <scope>NUCLEOTIDE SEQUENCE [LARGE SCALE GENOMIC DNA]</scope>
    <source>
        <strain>UCH-1/proctitis</strain>
    </source>
</reference>
<protein>
    <recommendedName>
        <fullName evidence="1">Glutamyl-tRNA(Gln) amidotransferase subunit A</fullName>
        <shortName evidence="1">Glu-ADT subunit A</shortName>
        <ecNumber evidence="1">6.3.5.7</ecNumber>
    </recommendedName>
</protein>
<feature type="chain" id="PRO_1000095122" description="Glutamyl-tRNA(Gln) amidotransferase subunit A">
    <location>
        <begin position="1"/>
        <end position="491"/>
    </location>
</feature>
<feature type="active site" description="Charge relay system" evidence="1">
    <location>
        <position position="77"/>
    </location>
</feature>
<feature type="active site" description="Charge relay system" evidence="1">
    <location>
        <position position="152"/>
    </location>
</feature>
<feature type="active site" description="Acyl-ester intermediate" evidence="1">
    <location>
        <position position="176"/>
    </location>
</feature>
<name>GATA_CHLTB</name>
<dbReference type="EC" id="6.3.5.7" evidence="1"/>
<dbReference type="EMBL" id="AM884177">
    <property type="protein sequence ID" value="CAP06651.1"/>
    <property type="molecule type" value="Genomic_DNA"/>
</dbReference>
<dbReference type="RefSeq" id="WP_009872304.1">
    <property type="nucleotide sequence ID" value="NC_010280.2"/>
</dbReference>
<dbReference type="SMR" id="B0BAY9"/>
<dbReference type="KEGG" id="ctl:CTLon_0253"/>
<dbReference type="HOGENOM" id="CLU_009600_0_3_0"/>
<dbReference type="Proteomes" id="UP001154401">
    <property type="component" value="Chromosome"/>
</dbReference>
<dbReference type="GO" id="GO:0030956">
    <property type="term" value="C:glutamyl-tRNA(Gln) amidotransferase complex"/>
    <property type="evidence" value="ECO:0007669"/>
    <property type="project" value="InterPro"/>
</dbReference>
<dbReference type="GO" id="GO:0005524">
    <property type="term" value="F:ATP binding"/>
    <property type="evidence" value="ECO:0007669"/>
    <property type="project" value="UniProtKB-KW"/>
</dbReference>
<dbReference type="GO" id="GO:0050567">
    <property type="term" value="F:glutaminyl-tRNA synthase (glutamine-hydrolyzing) activity"/>
    <property type="evidence" value="ECO:0007669"/>
    <property type="project" value="UniProtKB-UniRule"/>
</dbReference>
<dbReference type="GO" id="GO:0006412">
    <property type="term" value="P:translation"/>
    <property type="evidence" value="ECO:0007669"/>
    <property type="project" value="UniProtKB-UniRule"/>
</dbReference>
<dbReference type="Gene3D" id="3.90.1300.10">
    <property type="entry name" value="Amidase signature (AS) domain"/>
    <property type="match status" value="1"/>
</dbReference>
<dbReference type="HAMAP" id="MF_00120">
    <property type="entry name" value="GatA"/>
    <property type="match status" value="1"/>
</dbReference>
<dbReference type="InterPro" id="IPR000120">
    <property type="entry name" value="Amidase"/>
</dbReference>
<dbReference type="InterPro" id="IPR020556">
    <property type="entry name" value="Amidase_CS"/>
</dbReference>
<dbReference type="InterPro" id="IPR023631">
    <property type="entry name" value="Amidase_dom"/>
</dbReference>
<dbReference type="InterPro" id="IPR036928">
    <property type="entry name" value="AS_sf"/>
</dbReference>
<dbReference type="InterPro" id="IPR004412">
    <property type="entry name" value="GatA"/>
</dbReference>
<dbReference type="NCBIfam" id="TIGR00132">
    <property type="entry name" value="gatA"/>
    <property type="match status" value="1"/>
</dbReference>
<dbReference type="PANTHER" id="PTHR11895:SF151">
    <property type="entry name" value="GLUTAMYL-TRNA(GLN) AMIDOTRANSFERASE SUBUNIT A"/>
    <property type="match status" value="1"/>
</dbReference>
<dbReference type="PANTHER" id="PTHR11895">
    <property type="entry name" value="TRANSAMIDASE"/>
    <property type="match status" value="1"/>
</dbReference>
<dbReference type="Pfam" id="PF01425">
    <property type="entry name" value="Amidase"/>
    <property type="match status" value="1"/>
</dbReference>
<dbReference type="SUPFAM" id="SSF75304">
    <property type="entry name" value="Amidase signature (AS) enzymes"/>
    <property type="match status" value="1"/>
</dbReference>
<dbReference type="PROSITE" id="PS00571">
    <property type="entry name" value="AMIDASES"/>
    <property type="match status" value="1"/>
</dbReference>